<reference key="1">
    <citation type="submission" date="2008-01" db="EMBL/GenBank/DDBJ databases">
        <title>Complete sequence of chromosome of Caulobacter sp. K31.</title>
        <authorList>
            <consortium name="US DOE Joint Genome Institute"/>
            <person name="Copeland A."/>
            <person name="Lucas S."/>
            <person name="Lapidus A."/>
            <person name="Barry K."/>
            <person name="Glavina del Rio T."/>
            <person name="Dalin E."/>
            <person name="Tice H."/>
            <person name="Pitluck S."/>
            <person name="Bruce D."/>
            <person name="Goodwin L."/>
            <person name="Thompson L.S."/>
            <person name="Brettin T."/>
            <person name="Detter J.C."/>
            <person name="Han C."/>
            <person name="Schmutz J."/>
            <person name="Larimer F."/>
            <person name="Land M."/>
            <person name="Hauser L."/>
            <person name="Kyrpides N."/>
            <person name="Kim E."/>
            <person name="Stephens C."/>
            <person name="Richardson P."/>
        </authorList>
    </citation>
    <scope>NUCLEOTIDE SEQUENCE [LARGE SCALE GENOMIC DNA]</scope>
    <source>
        <strain>K31</strain>
    </source>
</reference>
<proteinExistence type="inferred from homology"/>
<organism>
    <name type="scientific">Caulobacter sp. (strain K31)</name>
    <dbReference type="NCBI Taxonomy" id="366602"/>
    <lineage>
        <taxon>Bacteria</taxon>
        <taxon>Pseudomonadati</taxon>
        <taxon>Pseudomonadota</taxon>
        <taxon>Alphaproteobacteria</taxon>
        <taxon>Caulobacterales</taxon>
        <taxon>Caulobacteraceae</taxon>
        <taxon>Caulobacter</taxon>
    </lineage>
</organism>
<evidence type="ECO:0000255" key="1">
    <source>
        <dbReference type="HAMAP-Rule" id="MF_00651"/>
    </source>
</evidence>
<sequence length="164" mass="17735">MPVLDIAEFAAAIPDYLPIVGLDPGEKTIGVAVSDVTLTVASPLALIKKTKFSEDAATLFQLMGSRKAAGIVIGLPMNMDGTEGVRCQSNRALGRNLLRLQPHIPITFWDERLSTAAVTRVLIEEHDVNRKRRAEVVDKMAAAWILQGALERMRGIAEAAGKGF</sequence>
<feature type="chain" id="PRO_1000082737" description="Putative pre-16S rRNA nuclease">
    <location>
        <begin position="1"/>
        <end position="164"/>
    </location>
</feature>
<name>YQGF_CAUSK</name>
<gene>
    <name type="ordered locus">Caul_1518</name>
</gene>
<comment type="function">
    <text evidence="1">Could be a nuclease involved in processing of the 5'-end of pre-16S rRNA.</text>
</comment>
<comment type="subcellular location">
    <subcellularLocation>
        <location evidence="1">Cytoplasm</location>
    </subcellularLocation>
</comment>
<comment type="similarity">
    <text evidence="1">Belongs to the YqgF nuclease family.</text>
</comment>
<protein>
    <recommendedName>
        <fullName evidence="1">Putative pre-16S rRNA nuclease</fullName>
        <ecNumber evidence="1">3.1.-.-</ecNumber>
    </recommendedName>
</protein>
<keyword id="KW-0963">Cytoplasm</keyword>
<keyword id="KW-0378">Hydrolase</keyword>
<keyword id="KW-0540">Nuclease</keyword>
<keyword id="KW-0690">Ribosome biogenesis</keyword>
<accession>B0T191</accession>
<dbReference type="EC" id="3.1.-.-" evidence="1"/>
<dbReference type="EMBL" id="CP000927">
    <property type="protein sequence ID" value="ABZ70648.1"/>
    <property type="molecule type" value="Genomic_DNA"/>
</dbReference>
<dbReference type="SMR" id="B0T191"/>
<dbReference type="STRING" id="366602.Caul_1518"/>
<dbReference type="KEGG" id="cak:Caul_1518"/>
<dbReference type="eggNOG" id="COG0816">
    <property type="taxonomic scope" value="Bacteria"/>
</dbReference>
<dbReference type="HOGENOM" id="CLU_098240_1_1_5"/>
<dbReference type="OrthoDB" id="9796140at2"/>
<dbReference type="GO" id="GO:0005829">
    <property type="term" value="C:cytosol"/>
    <property type="evidence" value="ECO:0007669"/>
    <property type="project" value="TreeGrafter"/>
</dbReference>
<dbReference type="GO" id="GO:0004518">
    <property type="term" value="F:nuclease activity"/>
    <property type="evidence" value="ECO:0007669"/>
    <property type="project" value="UniProtKB-KW"/>
</dbReference>
<dbReference type="GO" id="GO:0000967">
    <property type="term" value="P:rRNA 5'-end processing"/>
    <property type="evidence" value="ECO:0007669"/>
    <property type="project" value="UniProtKB-UniRule"/>
</dbReference>
<dbReference type="CDD" id="cd16964">
    <property type="entry name" value="YqgF"/>
    <property type="match status" value="1"/>
</dbReference>
<dbReference type="Gene3D" id="3.30.420.140">
    <property type="entry name" value="YqgF/RNase H-like domain"/>
    <property type="match status" value="1"/>
</dbReference>
<dbReference type="HAMAP" id="MF_00651">
    <property type="entry name" value="Nuclease_YqgF"/>
    <property type="match status" value="1"/>
</dbReference>
<dbReference type="InterPro" id="IPR012337">
    <property type="entry name" value="RNaseH-like_sf"/>
</dbReference>
<dbReference type="InterPro" id="IPR005227">
    <property type="entry name" value="YqgF"/>
</dbReference>
<dbReference type="InterPro" id="IPR006641">
    <property type="entry name" value="YqgF/RNaseH-like_dom"/>
</dbReference>
<dbReference type="InterPro" id="IPR037027">
    <property type="entry name" value="YqgF/RNaseH-like_dom_sf"/>
</dbReference>
<dbReference type="NCBIfam" id="TIGR00250">
    <property type="entry name" value="RNAse_H_YqgF"/>
    <property type="match status" value="1"/>
</dbReference>
<dbReference type="PANTHER" id="PTHR33317">
    <property type="entry name" value="POLYNUCLEOTIDYL TRANSFERASE, RIBONUCLEASE H-LIKE SUPERFAMILY PROTEIN"/>
    <property type="match status" value="1"/>
</dbReference>
<dbReference type="PANTHER" id="PTHR33317:SF4">
    <property type="entry name" value="POLYNUCLEOTIDYL TRANSFERASE, RIBONUCLEASE H-LIKE SUPERFAMILY PROTEIN"/>
    <property type="match status" value="1"/>
</dbReference>
<dbReference type="Pfam" id="PF03652">
    <property type="entry name" value="RuvX"/>
    <property type="match status" value="1"/>
</dbReference>
<dbReference type="SMART" id="SM00732">
    <property type="entry name" value="YqgFc"/>
    <property type="match status" value="1"/>
</dbReference>
<dbReference type="SUPFAM" id="SSF53098">
    <property type="entry name" value="Ribonuclease H-like"/>
    <property type="match status" value="1"/>
</dbReference>